<accession>P29373</accession>
<accession>B2R4Z8</accession>
<accession>D3DVC5</accession>
<accession>F1T098</accession>
<accession>Q6ICN6</accession>
<protein>
    <recommendedName>
        <fullName>Cellular retinoic acid-binding protein 2</fullName>
    </recommendedName>
    <alternativeName>
        <fullName>Cellular retinoic acid-binding protein II</fullName>
        <shortName>CRABP-II</shortName>
    </alternativeName>
</protein>
<name>RABP2_HUMAN</name>
<dbReference type="EMBL" id="M68867">
    <property type="protein sequence ID" value="AAA52068.1"/>
    <property type="molecule type" value="mRNA"/>
</dbReference>
<dbReference type="EMBL" id="M97815">
    <property type="protein sequence ID" value="AAA58430.1"/>
    <property type="molecule type" value="Genomic_DNA"/>
</dbReference>
<dbReference type="EMBL" id="M97814">
    <property type="protein sequence ID" value="AAA58430.1"/>
    <property type="status" value="JOINED"/>
    <property type="molecule type" value="Genomic_DNA"/>
</dbReference>
<dbReference type="EMBL" id="CR450357">
    <property type="protein sequence ID" value="CAG29353.1"/>
    <property type="molecule type" value="mRNA"/>
</dbReference>
<dbReference type="EMBL" id="BT019827">
    <property type="protein sequence ID" value="AAV38630.1"/>
    <property type="molecule type" value="mRNA"/>
</dbReference>
<dbReference type="EMBL" id="AK312007">
    <property type="protein sequence ID" value="BAG34945.1"/>
    <property type="molecule type" value="mRNA"/>
</dbReference>
<dbReference type="EMBL" id="AB593017">
    <property type="protein sequence ID" value="BAJ83972.1"/>
    <property type="molecule type" value="mRNA"/>
</dbReference>
<dbReference type="EMBL" id="AL590666">
    <property type="status" value="NOT_ANNOTATED_CDS"/>
    <property type="molecule type" value="Genomic_DNA"/>
</dbReference>
<dbReference type="EMBL" id="CH471121">
    <property type="protein sequence ID" value="EAW52921.1"/>
    <property type="molecule type" value="Genomic_DNA"/>
</dbReference>
<dbReference type="EMBL" id="CH471121">
    <property type="protein sequence ID" value="EAW52922.1"/>
    <property type="molecule type" value="Genomic_DNA"/>
</dbReference>
<dbReference type="EMBL" id="BC001109">
    <property type="protein sequence ID" value="AAH01109.1"/>
    <property type="molecule type" value="mRNA"/>
</dbReference>
<dbReference type="CCDS" id="CCDS1152.1"/>
<dbReference type="PIR" id="A45057">
    <property type="entry name" value="RJHU2"/>
</dbReference>
<dbReference type="RefSeq" id="NP_001186652.1">
    <property type="nucleotide sequence ID" value="NM_001199723.2"/>
</dbReference>
<dbReference type="RefSeq" id="NP_001869.1">
    <property type="nucleotide sequence ID" value="NM_001878.4"/>
</dbReference>
<dbReference type="RefSeq" id="XP_016855832.1">
    <property type="nucleotide sequence ID" value="XM_017000343.1"/>
</dbReference>
<dbReference type="PDB" id="1BLR">
    <property type="method" value="NMR"/>
    <property type="chains" value="A=2-138"/>
</dbReference>
<dbReference type="PDB" id="1BM5">
    <property type="method" value="NMR"/>
    <property type="chains" value="A=2-138"/>
</dbReference>
<dbReference type="PDB" id="1CBQ">
    <property type="method" value="X-ray"/>
    <property type="resolution" value="2.20 A"/>
    <property type="chains" value="A=2-138"/>
</dbReference>
<dbReference type="PDB" id="1CBS">
    <property type="method" value="X-ray"/>
    <property type="resolution" value="1.80 A"/>
    <property type="chains" value="A=2-138"/>
</dbReference>
<dbReference type="PDB" id="1XCA">
    <property type="method" value="X-ray"/>
    <property type="resolution" value="2.30 A"/>
    <property type="chains" value="A/B=2-138"/>
</dbReference>
<dbReference type="PDB" id="2CBS">
    <property type="method" value="X-ray"/>
    <property type="resolution" value="2.10 A"/>
    <property type="chains" value="A=2-138"/>
</dbReference>
<dbReference type="PDB" id="2FR3">
    <property type="method" value="X-ray"/>
    <property type="resolution" value="1.48 A"/>
    <property type="chains" value="A=2-138"/>
</dbReference>
<dbReference type="PDB" id="2FRS">
    <property type="method" value="X-ray"/>
    <property type="resolution" value="1.51 A"/>
    <property type="chains" value="A/B=2-138"/>
</dbReference>
<dbReference type="PDB" id="2FS6">
    <property type="method" value="X-ray"/>
    <property type="resolution" value="1.35 A"/>
    <property type="chains" value="A/B=2-138"/>
</dbReference>
<dbReference type="PDB" id="2FS7">
    <property type="method" value="X-ray"/>
    <property type="resolution" value="1.55 A"/>
    <property type="chains" value="A/B=2-138"/>
</dbReference>
<dbReference type="PDB" id="2G78">
    <property type="method" value="X-ray"/>
    <property type="resolution" value="1.70 A"/>
    <property type="chains" value="A=2-138"/>
</dbReference>
<dbReference type="PDB" id="2G79">
    <property type="method" value="X-ray"/>
    <property type="resolution" value="1.69 A"/>
    <property type="chains" value="A=2-138"/>
</dbReference>
<dbReference type="PDB" id="2G7B">
    <property type="method" value="X-ray"/>
    <property type="resolution" value="1.18 A"/>
    <property type="chains" value="A=2-138"/>
</dbReference>
<dbReference type="PDB" id="3CBS">
    <property type="method" value="X-ray"/>
    <property type="resolution" value="2.00 A"/>
    <property type="chains" value="A=2-138"/>
</dbReference>
<dbReference type="PDB" id="3CR6">
    <property type="method" value="X-ray"/>
    <property type="resolution" value="1.22 A"/>
    <property type="chains" value="A=2-138"/>
</dbReference>
<dbReference type="PDB" id="3CWK">
    <property type="method" value="X-ray"/>
    <property type="resolution" value="1.60 A"/>
    <property type="chains" value="A=2-138"/>
</dbReference>
<dbReference type="PDB" id="3D95">
    <property type="method" value="X-ray"/>
    <property type="resolution" value="1.20 A"/>
    <property type="chains" value="A/B=2-138"/>
</dbReference>
<dbReference type="PDB" id="3D96">
    <property type="method" value="X-ray"/>
    <property type="resolution" value="1.71 A"/>
    <property type="chains" value="A/B=2-138"/>
</dbReference>
<dbReference type="PDB" id="3D97">
    <property type="method" value="X-ray"/>
    <property type="resolution" value="1.50 A"/>
    <property type="chains" value="A/B=2-138"/>
</dbReference>
<dbReference type="PDB" id="3F8A">
    <property type="method" value="X-ray"/>
    <property type="resolution" value="1.95 A"/>
    <property type="chains" value="A=2-138"/>
</dbReference>
<dbReference type="PDB" id="3F9D">
    <property type="method" value="X-ray"/>
    <property type="resolution" value="2.00 A"/>
    <property type="chains" value="A/B=2-138"/>
</dbReference>
<dbReference type="PDB" id="3FA6">
    <property type="method" value="X-ray"/>
    <property type="resolution" value="1.54 A"/>
    <property type="chains" value="A/B=2-138"/>
</dbReference>
<dbReference type="PDB" id="3FA7">
    <property type="method" value="X-ray"/>
    <property type="resolution" value="1.90 A"/>
    <property type="chains" value="A/B=2-138"/>
</dbReference>
<dbReference type="PDB" id="3FA8">
    <property type="method" value="X-ray"/>
    <property type="resolution" value="1.78 A"/>
    <property type="chains" value="A/B=2-138"/>
</dbReference>
<dbReference type="PDB" id="3FA9">
    <property type="method" value="X-ray"/>
    <property type="resolution" value="1.94 A"/>
    <property type="chains" value="A/B=2-138"/>
</dbReference>
<dbReference type="PDB" id="3FEK">
    <property type="method" value="X-ray"/>
    <property type="resolution" value="1.51 A"/>
    <property type="chains" value="A/B=2-138"/>
</dbReference>
<dbReference type="PDB" id="3FEL">
    <property type="method" value="X-ray"/>
    <property type="resolution" value="1.85 A"/>
    <property type="chains" value="A/B=2-138"/>
</dbReference>
<dbReference type="PDB" id="3FEN">
    <property type="method" value="X-ray"/>
    <property type="resolution" value="1.56 A"/>
    <property type="chains" value="A/B=2-138"/>
</dbReference>
<dbReference type="PDB" id="3FEP">
    <property type="method" value="X-ray"/>
    <property type="resolution" value="2.60 A"/>
    <property type="chains" value="A=2-138"/>
</dbReference>
<dbReference type="PDB" id="3I17">
    <property type="method" value="X-ray"/>
    <property type="resolution" value="1.68 A"/>
    <property type="chains" value="A/B=2-138"/>
</dbReference>
<dbReference type="PDB" id="4I9R">
    <property type="method" value="X-ray"/>
    <property type="resolution" value="2.60 A"/>
    <property type="chains" value="A=2-138"/>
</dbReference>
<dbReference type="PDB" id="4I9S">
    <property type="method" value="X-ray"/>
    <property type="resolution" value="2.58 A"/>
    <property type="chains" value="A=2-138"/>
</dbReference>
<dbReference type="PDB" id="4M6S">
    <property type="method" value="X-ray"/>
    <property type="resolution" value="2.47 A"/>
    <property type="chains" value="A=2-138"/>
</dbReference>
<dbReference type="PDB" id="4M7M">
    <property type="method" value="X-ray"/>
    <property type="resolution" value="2.57 A"/>
    <property type="chains" value="A=2-138"/>
</dbReference>
<dbReference type="PDB" id="4QGV">
    <property type="method" value="X-ray"/>
    <property type="resolution" value="1.73 A"/>
    <property type="chains" value="A/B=2-138"/>
</dbReference>
<dbReference type="PDB" id="4QGW">
    <property type="method" value="X-ray"/>
    <property type="resolution" value="1.77 A"/>
    <property type="chains" value="A/B=2-138"/>
</dbReference>
<dbReference type="PDB" id="4QGX">
    <property type="method" value="X-ray"/>
    <property type="resolution" value="1.47 A"/>
    <property type="chains" value="A/B=2-138"/>
</dbReference>
<dbReference type="PDB" id="4YBP">
    <property type="method" value="X-ray"/>
    <property type="resolution" value="1.83 A"/>
    <property type="chains" value="A=2-138"/>
</dbReference>
<dbReference type="PDB" id="4YBU">
    <property type="method" value="X-ray"/>
    <property type="resolution" value="1.92 A"/>
    <property type="chains" value="A=2-138"/>
</dbReference>
<dbReference type="PDB" id="4YCE">
    <property type="method" value="X-ray"/>
    <property type="resolution" value="1.95 A"/>
    <property type="chains" value="A=2-138"/>
</dbReference>
<dbReference type="PDB" id="4YCH">
    <property type="method" value="X-ray"/>
    <property type="resolution" value="1.96 A"/>
    <property type="chains" value="A=2-138"/>
</dbReference>
<dbReference type="PDB" id="4YDA">
    <property type="method" value="X-ray"/>
    <property type="resolution" value="1.95 A"/>
    <property type="chains" value="A=2-138"/>
</dbReference>
<dbReference type="PDB" id="4YDB">
    <property type="method" value="X-ray"/>
    <property type="resolution" value="2.03 A"/>
    <property type="chains" value="A=2-138"/>
</dbReference>
<dbReference type="PDB" id="4YFP">
    <property type="method" value="X-ray"/>
    <property type="resolution" value="1.95 A"/>
    <property type="chains" value="A=2-138"/>
</dbReference>
<dbReference type="PDB" id="4YFQ">
    <property type="method" value="X-ray"/>
    <property type="resolution" value="1.62 A"/>
    <property type="chains" value="A=2-138"/>
</dbReference>
<dbReference type="PDB" id="4YFR">
    <property type="method" value="X-ray"/>
    <property type="resolution" value="1.95 A"/>
    <property type="chains" value="A=2-138"/>
</dbReference>
<dbReference type="PDB" id="4YGG">
    <property type="method" value="X-ray"/>
    <property type="resolution" value="1.90 A"/>
    <property type="chains" value="A=2-138"/>
</dbReference>
<dbReference type="PDB" id="4YGH">
    <property type="method" value="X-ray"/>
    <property type="resolution" value="2.10 A"/>
    <property type="chains" value="A=2-138"/>
</dbReference>
<dbReference type="PDB" id="4YGZ">
    <property type="method" value="X-ray"/>
    <property type="resolution" value="2.06 A"/>
    <property type="chains" value="A=2-138"/>
</dbReference>
<dbReference type="PDB" id="4YH0">
    <property type="method" value="X-ray"/>
    <property type="resolution" value="2.14 A"/>
    <property type="chains" value="A=2-138"/>
</dbReference>
<dbReference type="PDB" id="4YKM">
    <property type="method" value="X-ray"/>
    <property type="resolution" value="1.58 A"/>
    <property type="chains" value="A/B=2-138"/>
</dbReference>
<dbReference type="PDB" id="4YKO">
    <property type="method" value="X-ray"/>
    <property type="resolution" value="1.57 A"/>
    <property type="chains" value="A/B=2-138"/>
</dbReference>
<dbReference type="PDB" id="5HZQ">
    <property type="method" value="X-ray"/>
    <property type="resolution" value="1.75 A"/>
    <property type="chains" value="A/B=1-138"/>
</dbReference>
<dbReference type="PDB" id="5OGB">
    <property type="method" value="X-ray"/>
    <property type="resolution" value="1.80 A"/>
    <property type="chains" value="A=1-138"/>
</dbReference>
<dbReference type="PDB" id="6HKR">
    <property type="method" value="X-ray"/>
    <property type="resolution" value="1.50 A"/>
    <property type="chains" value="A=1-138"/>
</dbReference>
<dbReference type="PDB" id="6MOP">
    <property type="method" value="X-ray"/>
    <property type="resolution" value="1.90 A"/>
    <property type="chains" value="A=2-138"/>
</dbReference>
<dbReference type="PDB" id="6MOQ">
    <property type="method" value="X-ray"/>
    <property type="resolution" value="2.20 A"/>
    <property type="chains" value="A=2-138"/>
</dbReference>
<dbReference type="PDB" id="6MOR">
    <property type="method" value="X-ray"/>
    <property type="resolution" value="1.79 A"/>
    <property type="chains" value="A=2-138"/>
</dbReference>
<dbReference type="PDB" id="6MOV">
    <property type="method" value="X-ray"/>
    <property type="resolution" value="1.75 A"/>
    <property type="chains" value="A=2-138"/>
</dbReference>
<dbReference type="PDB" id="6MOW">
    <property type="method" value="X-ray"/>
    <property type="resolution" value="2.35 A"/>
    <property type="chains" value="A=2-138"/>
</dbReference>
<dbReference type="PDB" id="6MOX">
    <property type="method" value="X-ray"/>
    <property type="resolution" value="2.18 A"/>
    <property type="chains" value="A=2-138"/>
</dbReference>
<dbReference type="PDB" id="6MPK">
    <property type="method" value="X-ray"/>
    <property type="resolution" value="1.58 A"/>
    <property type="chains" value="A=2-138"/>
</dbReference>
<dbReference type="PDB" id="6MQI">
    <property type="method" value="X-ray"/>
    <property type="resolution" value="1.87 A"/>
    <property type="chains" value="A=2-138"/>
</dbReference>
<dbReference type="PDB" id="6MQJ">
    <property type="method" value="X-ray"/>
    <property type="resolution" value="2.12 A"/>
    <property type="chains" value="A=2-138"/>
</dbReference>
<dbReference type="PDB" id="6MQW">
    <property type="method" value="X-ray"/>
    <property type="resolution" value="2.09 A"/>
    <property type="chains" value="A=2-138"/>
</dbReference>
<dbReference type="PDB" id="6MQX">
    <property type="method" value="X-ray"/>
    <property type="resolution" value="2.01 A"/>
    <property type="chains" value="A=2-138"/>
</dbReference>
<dbReference type="PDB" id="6MQY">
    <property type="method" value="X-ray"/>
    <property type="resolution" value="1.90 A"/>
    <property type="chains" value="A=2-138"/>
</dbReference>
<dbReference type="PDB" id="6MQZ">
    <property type="method" value="X-ray"/>
    <property type="resolution" value="2.07 A"/>
    <property type="chains" value="A=2-138"/>
</dbReference>
<dbReference type="PDB" id="6MR0">
    <property type="method" value="X-ray"/>
    <property type="resolution" value="2.65 A"/>
    <property type="chains" value="A=2-138"/>
</dbReference>
<dbReference type="PDB" id="6NNX">
    <property type="method" value="X-ray"/>
    <property type="resolution" value="1.87 A"/>
    <property type="chains" value="A=2-138"/>
</dbReference>
<dbReference type="PDB" id="6NNY">
    <property type="method" value="X-ray"/>
    <property type="resolution" value="1.67 A"/>
    <property type="chains" value="A=2-138"/>
</dbReference>
<dbReference type="PDB" id="6NOE">
    <property type="method" value="X-ray"/>
    <property type="resolution" value="1.97 A"/>
    <property type="chains" value="A=2-138"/>
</dbReference>
<dbReference type="PDB" id="6Z2U">
    <property type="method" value="X-ray"/>
    <property type="resolution" value="2.40 A"/>
    <property type="chains" value="A=1-138"/>
</dbReference>
<dbReference type="PDB" id="6Z2Z">
    <property type="method" value="X-ray"/>
    <property type="resolution" value="2.55 A"/>
    <property type="chains" value="A=1-138"/>
</dbReference>
<dbReference type="PDB" id="6ZSW">
    <property type="method" value="X-ray"/>
    <property type="resolution" value="2.08 A"/>
    <property type="chains" value="A=1-138"/>
</dbReference>
<dbReference type="PDB" id="6ZSX">
    <property type="method" value="X-ray"/>
    <property type="resolution" value="2.40 A"/>
    <property type="chains" value="A=1-138"/>
</dbReference>
<dbReference type="PDB" id="7AA0">
    <property type="method" value="X-ray"/>
    <property type="resolution" value="1.82 A"/>
    <property type="chains" value="AAA/BBB=1-138"/>
</dbReference>
<dbReference type="PDB" id="7AA1">
    <property type="method" value="X-ray"/>
    <property type="resolution" value="1.71 A"/>
    <property type="chains" value="AAA=1-138"/>
</dbReference>
<dbReference type="PDB" id="7OXW">
    <property type="method" value="X-ray"/>
    <property type="resolution" value="1.16 A"/>
    <property type="chains" value="A=1-138"/>
</dbReference>
<dbReference type="PDB" id="7OXX">
    <property type="method" value="X-ray"/>
    <property type="resolution" value="1.33 A"/>
    <property type="chains" value="A/B/C/D=1-138"/>
</dbReference>
<dbReference type="PDB" id="7RY5">
    <property type="method" value="X-ray"/>
    <property type="resolution" value="2.00 A"/>
    <property type="chains" value="AAA/BBB=2-138"/>
</dbReference>
<dbReference type="PDBsum" id="1BLR"/>
<dbReference type="PDBsum" id="1BM5"/>
<dbReference type="PDBsum" id="1CBQ"/>
<dbReference type="PDBsum" id="1CBS"/>
<dbReference type="PDBsum" id="1XCA"/>
<dbReference type="PDBsum" id="2CBS"/>
<dbReference type="PDBsum" id="2FR3"/>
<dbReference type="PDBsum" id="2FRS"/>
<dbReference type="PDBsum" id="2FS6"/>
<dbReference type="PDBsum" id="2FS7"/>
<dbReference type="PDBsum" id="2G78"/>
<dbReference type="PDBsum" id="2G79"/>
<dbReference type="PDBsum" id="2G7B"/>
<dbReference type="PDBsum" id="3CBS"/>
<dbReference type="PDBsum" id="3CR6"/>
<dbReference type="PDBsum" id="3CWK"/>
<dbReference type="PDBsum" id="3D95"/>
<dbReference type="PDBsum" id="3D96"/>
<dbReference type="PDBsum" id="3D97"/>
<dbReference type="PDBsum" id="3F8A"/>
<dbReference type="PDBsum" id="3F9D"/>
<dbReference type="PDBsum" id="3FA6"/>
<dbReference type="PDBsum" id="3FA7"/>
<dbReference type="PDBsum" id="3FA8"/>
<dbReference type="PDBsum" id="3FA9"/>
<dbReference type="PDBsum" id="3FEK"/>
<dbReference type="PDBsum" id="3FEL"/>
<dbReference type="PDBsum" id="3FEN"/>
<dbReference type="PDBsum" id="3FEP"/>
<dbReference type="PDBsum" id="3I17"/>
<dbReference type="PDBsum" id="4I9R"/>
<dbReference type="PDBsum" id="4I9S"/>
<dbReference type="PDBsum" id="4M6S"/>
<dbReference type="PDBsum" id="4M7M"/>
<dbReference type="PDBsum" id="4QGV"/>
<dbReference type="PDBsum" id="4QGW"/>
<dbReference type="PDBsum" id="4QGX"/>
<dbReference type="PDBsum" id="4YBP"/>
<dbReference type="PDBsum" id="4YBU"/>
<dbReference type="PDBsum" id="4YCE"/>
<dbReference type="PDBsum" id="4YCH"/>
<dbReference type="PDBsum" id="4YDA"/>
<dbReference type="PDBsum" id="4YDB"/>
<dbReference type="PDBsum" id="4YFP"/>
<dbReference type="PDBsum" id="4YFQ"/>
<dbReference type="PDBsum" id="4YFR"/>
<dbReference type="PDBsum" id="4YGG"/>
<dbReference type="PDBsum" id="4YGH"/>
<dbReference type="PDBsum" id="4YGZ"/>
<dbReference type="PDBsum" id="4YH0"/>
<dbReference type="PDBsum" id="4YKM"/>
<dbReference type="PDBsum" id="4YKO"/>
<dbReference type="PDBsum" id="5HZQ"/>
<dbReference type="PDBsum" id="5OGB"/>
<dbReference type="PDBsum" id="6HKR"/>
<dbReference type="PDBsum" id="6MOP"/>
<dbReference type="PDBsum" id="6MOQ"/>
<dbReference type="PDBsum" id="6MOR"/>
<dbReference type="PDBsum" id="6MOV"/>
<dbReference type="PDBsum" id="6MOW"/>
<dbReference type="PDBsum" id="6MOX"/>
<dbReference type="PDBsum" id="6MPK"/>
<dbReference type="PDBsum" id="6MQI"/>
<dbReference type="PDBsum" id="6MQJ"/>
<dbReference type="PDBsum" id="6MQW"/>
<dbReference type="PDBsum" id="6MQX"/>
<dbReference type="PDBsum" id="6MQY"/>
<dbReference type="PDBsum" id="6MQZ"/>
<dbReference type="PDBsum" id="6MR0"/>
<dbReference type="PDBsum" id="6NNX"/>
<dbReference type="PDBsum" id="6NNY"/>
<dbReference type="PDBsum" id="6NOE"/>
<dbReference type="PDBsum" id="6Z2U"/>
<dbReference type="PDBsum" id="6Z2Z"/>
<dbReference type="PDBsum" id="6ZSW"/>
<dbReference type="PDBsum" id="6ZSX"/>
<dbReference type="PDBsum" id="7AA0"/>
<dbReference type="PDBsum" id="7AA1"/>
<dbReference type="PDBsum" id="7OXW"/>
<dbReference type="PDBsum" id="7OXX"/>
<dbReference type="PDBsum" id="7RY5"/>
<dbReference type="BMRB" id="P29373"/>
<dbReference type="SMR" id="P29373"/>
<dbReference type="BioGRID" id="107773">
    <property type="interactions" value="80"/>
</dbReference>
<dbReference type="CORUM" id="P29373"/>
<dbReference type="FunCoup" id="P29373">
    <property type="interactions" value="1116"/>
</dbReference>
<dbReference type="IntAct" id="P29373">
    <property type="interactions" value="35"/>
</dbReference>
<dbReference type="STRING" id="9606.ENSP00000482841"/>
<dbReference type="BindingDB" id="P29373"/>
<dbReference type="ChEMBL" id="CHEMBL2692"/>
<dbReference type="DrugBank" id="DB08127">
    <property type="generic name" value="1,3,3-trimethyl-2-[(1E,3E)-3-methylpenta-1,3-dien-1-yl]cyclohexene"/>
</dbReference>
<dbReference type="DrugBank" id="DB08467">
    <property type="generic name" value="6-(2,3,4,5,6,7-HEXAHYDRO-2,4,4-TRIMETHYL-1-METYLENEINDEN-2-YL)-3-METHYLHEXA-2,4-DIENOIC ACID"/>
</dbReference>
<dbReference type="DrugBank" id="DB00523">
    <property type="generic name" value="Alitretinoin"/>
</dbReference>
<dbReference type="DrugBank" id="DB08455">
    <property type="generic name" value="Ro 12-7310"/>
</dbReference>
<dbReference type="DrugBank" id="DB00755">
    <property type="generic name" value="Tretinoin"/>
</dbReference>
<dbReference type="iPTMnet" id="P29373"/>
<dbReference type="MetOSite" id="P29373"/>
<dbReference type="PhosphoSitePlus" id="P29373"/>
<dbReference type="SwissPalm" id="P29373"/>
<dbReference type="BioMuta" id="CRABP2"/>
<dbReference type="DMDM" id="132401"/>
<dbReference type="CPTAC" id="CPTAC-51"/>
<dbReference type="CPTAC" id="CPTAC-52"/>
<dbReference type="jPOST" id="P29373"/>
<dbReference type="MassIVE" id="P29373"/>
<dbReference type="PaxDb" id="9606-ENSP00000482841"/>
<dbReference type="PeptideAtlas" id="P29373"/>
<dbReference type="ProteomicsDB" id="54555"/>
<dbReference type="Pumba" id="P29373"/>
<dbReference type="Antibodypedia" id="20440">
    <property type="antibodies" value="706 antibodies from 40 providers"/>
</dbReference>
<dbReference type="CPTC" id="P29373">
    <property type="antibodies" value="2 antibodies"/>
</dbReference>
<dbReference type="DNASU" id="1382"/>
<dbReference type="Ensembl" id="ENST00000368221.1">
    <property type="protein sequence ID" value="ENSP00000357204.1"/>
    <property type="gene ID" value="ENSG00000143320.9"/>
</dbReference>
<dbReference type="Ensembl" id="ENST00000368222.8">
    <property type="protein sequence ID" value="ENSP00000357205.3"/>
    <property type="gene ID" value="ENSG00000143320.9"/>
</dbReference>
<dbReference type="Ensembl" id="ENST00000621784.4">
    <property type="protein sequence ID" value="ENSP00000482841.1"/>
    <property type="gene ID" value="ENSG00000143320.9"/>
</dbReference>
<dbReference type="GeneID" id="1382"/>
<dbReference type="KEGG" id="hsa:1382"/>
<dbReference type="MANE-Select" id="ENST00000368222.8">
    <property type="protein sequence ID" value="ENSP00000357205.3"/>
    <property type="RefSeq nucleotide sequence ID" value="NM_001878.4"/>
    <property type="RefSeq protein sequence ID" value="NP_001869.1"/>
</dbReference>
<dbReference type="UCSC" id="uc001fpr.4">
    <property type="organism name" value="human"/>
</dbReference>
<dbReference type="AGR" id="HGNC:2339"/>
<dbReference type="CTD" id="1382"/>
<dbReference type="DisGeNET" id="1382"/>
<dbReference type="GeneCards" id="CRABP2"/>
<dbReference type="HGNC" id="HGNC:2339">
    <property type="gene designation" value="CRABP2"/>
</dbReference>
<dbReference type="HPA" id="ENSG00000143320">
    <property type="expression patterns" value="Tissue enhanced (esophagus, vagina)"/>
</dbReference>
<dbReference type="MIM" id="180231">
    <property type="type" value="gene"/>
</dbReference>
<dbReference type="neXtProt" id="NX_P29373"/>
<dbReference type="OpenTargets" id="ENSG00000143320"/>
<dbReference type="PharmGKB" id="PA26859"/>
<dbReference type="VEuPathDB" id="HostDB:ENSG00000143320"/>
<dbReference type="eggNOG" id="KOG4015">
    <property type="taxonomic scope" value="Eukaryota"/>
</dbReference>
<dbReference type="GeneTree" id="ENSGT00940000157619"/>
<dbReference type="HOGENOM" id="CLU_113772_0_2_1"/>
<dbReference type="InParanoid" id="P29373"/>
<dbReference type="OMA" id="TMMADDV"/>
<dbReference type="OrthoDB" id="195110at2759"/>
<dbReference type="PAN-GO" id="P29373">
    <property type="GO annotations" value="5 GO annotations based on evolutionary models"/>
</dbReference>
<dbReference type="PhylomeDB" id="P29373"/>
<dbReference type="TreeFam" id="TF316894"/>
<dbReference type="PathwayCommons" id="P29373"/>
<dbReference type="Reactome" id="R-HSA-5362517">
    <property type="pathway name" value="Signaling by Retinoic Acid"/>
</dbReference>
<dbReference type="SignaLink" id="P29373"/>
<dbReference type="SIGNOR" id="P29373"/>
<dbReference type="BioGRID-ORCS" id="1382">
    <property type="hits" value="22 hits in 1159 CRISPR screens"/>
</dbReference>
<dbReference type="EvolutionaryTrace" id="P29373"/>
<dbReference type="GeneWiki" id="CRABP2"/>
<dbReference type="GenomeRNAi" id="1382"/>
<dbReference type="Pharos" id="P29373">
    <property type="development level" value="Tchem"/>
</dbReference>
<dbReference type="PRO" id="PR:P29373"/>
<dbReference type="Proteomes" id="UP000005640">
    <property type="component" value="Chromosome 1"/>
</dbReference>
<dbReference type="RNAct" id="P29373">
    <property type="molecule type" value="protein"/>
</dbReference>
<dbReference type="Bgee" id="ENSG00000143320">
    <property type="expression patterns" value="Expressed in lower esophagus mucosa and 146 other cell types or tissues"/>
</dbReference>
<dbReference type="ExpressionAtlas" id="P29373">
    <property type="expression patterns" value="baseline and differential"/>
</dbReference>
<dbReference type="GO" id="GO:0005737">
    <property type="term" value="C:cytoplasm"/>
    <property type="evidence" value="ECO:0000314"/>
    <property type="project" value="MGI"/>
</dbReference>
<dbReference type="GO" id="GO:0005829">
    <property type="term" value="C:cytosol"/>
    <property type="evidence" value="ECO:0000314"/>
    <property type="project" value="HPA"/>
</dbReference>
<dbReference type="GO" id="GO:0005783">
    <property type="term" value="C:endoplasmic reticulum"/>
    <property type="evidence" value="ECO:0007669"/>
    <property type="project" value="UniProtKB-SubCell"/>
</dbReference>
<dbReference type="GO" id="GO:0070062">
    <property type="term" value="C:extracellular exosome"/>
    <property type="evidence" value="ECO:0007005"/>
    <property type="project" value="UniProtKB"/>
</dbReference>
<dbReference type="GO" id="GO:0005654">
    <property type="term" value="C:nucleoplasm"/>
    <property type="evidence" value="ECO:0000314"/>
    <property type="project" value="HPA"/>
</dbReference>
<dbReference type="GO" id="GO:0005634">
    <property type="term" value="C:nucleus"/>
    <property type="evidence" value="ECO:0000314"/>
    <property type="project" value="MGI"/>
</dbReference>
<dbReference type="GO" id="GO:0030332">
    <property type="term" value="F:cyclin binding"/>
    <property type="evidence" value="ECO:0000314"/>
    <property type="project" value="MGI"/>
</dbReference>
<dbReference type="GO" id="GO:0005504">
    <property type="term" value="F:fatty acid binding"/>
    <property type="evidence" value="ECO:0000318"/>
    <property type="project" value="GO_Central"/>
</dbReference>
<dbReference type="GO" id="GO:0016918">
    <property type="term" value="F:retinal binding"/>
    <property type="evidence" value="ECO:0007669"/>
    <property type="project" value="UniProtKB-KW"/>
</dbReference>
<dbReference type="GO" id="GO:0001972">
    <property type="term" value="F:retinoic acid binding"/>
    <property type="evidence" value="ECO:0000318"/>
    <property type="project" value="GO_Central"/>
</dbReference>
<dbReference type="GO" id="GO:0005501">
    <property type="term" value="F:retinoid binding"/>
    <property type="evidence" value="ECO:0000304"/>
    <property type="project" value="ProtInc"/>
</dbReference>
<dbReference type="GO" id="GO:0019841">
    <property type="term" value="F:retinol binding"/>
    <property type="evidence" value="ECO:0007669"/>
    <property type="project" value="UniProtKB-KW"/>
</dbReference>
<dbReference type="GO" id="GO:0035115">
    <property type="term" value="P:embryonic forelimb morphogenesis"/>
    <property type="evidence" value="ECO:0007669"/>
    <property type="project" value="Ensembl"/>
</dbReference>
<dbReference type="GO" id="GO:0008544">
    <property type="term" value="P:epidermis development"/>
    <property type="evidence" value="ECO:0000304"/>
    <property type="project" value="ProtInc"/>
</dbReference>
<dbReference type="GO" id="GO:0015908">
    <property type="term" value="P:fatty acid transport"/>
    <property type="evidence" value="ECO:0000318"/>
    <property type="project" value="GO_Central"/>
</dbReference>
<dbReference type="GO" id="GO:0048672">
    <property type="term" value="P:positive regulation of collateral sprouting"/>
    <property type="evidence" value="ECO:0007669"/>
    <property type="project" value="Ensembl"/>
</dbReference>
<dbReference type="GO" id="GO:0006355">
    <property type="term" value="P:regulation of DNA-templated transcription"/>
    <property type="evidence" value="ECO:0000304"/>
    <property type="project" value="ProtInc"/>
</dbReference>
<dbReference type="GO" id="GO:0042573">
    <property type="term" value="P:retinoic acid metabolic process"/>
    <property type="evidence" value="ECO:0007669"/>
    <property type="project" value="Ensembl"/>
</dbReference>
<dbReference type="GO" id="GO:0007165">
    <property type="term" value="P:signal transduction"/>
    <property type="evidence" value="ECO:0000304"/>
    <property type="project" value="ProtInc"/>
</dbReference>
<dbReference type="CDD" id="cd19461">
    <property type="entry name" value="CRABP2"/>
    <property type="match status" value="1"/>
</dbReference>
<dbReference type="FunFam" id="2.40.128.20:FF:000001">
    <property type="entry name" value="Fatty acid-binding protein, adipocyte"/>
    <property type="match status" value="1"/>
</dbReference>
<dbReference type="Gene3D" id="2.40.128.20">
    <property type="match status" value="1"/>
</dbReference>
<dbReference type="InterPro" id="IPR012674">
    <property type="entry name" value="Calycin"/>
</dbReference>
<dbReference type="InterPro" id="IPR000463">
    <property type="entry name" value="Fatty_acid-bd"/>
</dbReference>
<dbReference type="InterPro" id="IPR031259">
    <property type="entry name" value="ILBP"/>
</dbReference>
<dbReference type="InterPro" id="IPR000566">
    <property type="entry name" value="Lipocln_cytosolic_FA-bd_dom"/>
</dbReference>
<dbReference type="PANTHER" id="PTHR11955">
    <property type="entry name" value="FATTY ACID BINDING PROTEIN"/>
    <property type="match status" value="1"/>
</dbReference>
<dbReference type="Pfam" id="PF00061">
    <property type="entry name" value="Lipocalin"/>
    <property type="match status" value="1"/>
</dbReference>
<dbReference type="PRINTS" id="PR00178">
    <property type="entry name" value="FATTYACIDBP"/>
</dbReference>
<dbReference type="SUPFAM" id="SSF50814">
    <property type="entry name" value="Lipocalins"/>
    <property type="match status" value="1"/>
</dbReference>
<dbReference type="PROSITE" id="PS00214">
    <property type="entry name" value="FABP"/>
    <property type="match status" value="1"/>
</dbReference>
<keyword id="KW-0002">3D-structure</keyword>
<keyword id="KW-0963">Cytoplasm</keyword>
<keyword id="KW-0256">Endoplasmic reticulum</keyword>
<keyword id="KW-1017">Isopeptide bond</keyword>
<keyword id="KW-0539">Nucleus</keyword>
<keyword id="KW-1267">Proteomics identification</keyword>
<keyword id="KW-1185">Reference proteome</keyword>
<keyword id="KW-0683">Retinol-binding</keyword>
<keyword id="KW-0813">Transport</keyword>
<keyword id="KW-0832">Ubl conjugation</keyword>
<keyword id="KW-0845">Vitamin A</keyword>
<sequence>MPNFSGNWKIIRSENFEELLKVLGVNVMLRKIAVAAASKPAVEIKQEGDTFYIKTSTTVRTTEINFKVGEEFEEQTVDGRPCKSLVKWESENKMVCEQKLLKGEGPKTSWTRELTNDGELILTMTADDVVCTRVYVRE</sequence>
<gene>
    <name type="primary">CRABP2</name>
</gene>
<comment type="function">
    <text>Transports retinoic acid to the nucleus. Regulates the access of retinoic acid to the nuclear retinoic acid receptors.</text>
</comment>
<comment type="subunit">
    <text evidence="1 2 5">Interacts with RXR and RARA (By similarity). Interacts with importin alpha.</text>
</comment>
<comment type="interaction">
    <interactant intactId="EBI-10204806">
        <id>P29373</id>
    </interactant>
    <interactant intactId="EBI-77797">
        <id>P35609</id>
        <label>ACTN2</label>
    </interactant>
    <organismsDiffer>false</organismsDiffer>
    <experiments>3</experiments>
</comment>
<comment type="interaction">
    <interactant intactId="EBI-10204806">
        <id>P29373</id>
    </interactant>
    <interactant intactId="EBI-375013">
        <id>P30281</id>
        <label>CCND3</label>
    </interactant>
    <organismsDiffer>false</organismsDiffer>
    <experiments>3</experiments>
</comment>
<comment type="interaction">
    <interactant intactId="EBI-10204806">
        <id>P29373</id>
    </interactant>
    <interactant intactId="EBI-11526128">
        <id>Q8NFF5-2</id>
        <label>FLAD1</label>
    </interactant>
    <organismsDiffer>false</organismsDiffer>
    <experiments>3</experiments>
</comment>
<comment type="interaction">
    <interactant intactId="EBI-10204806">
        <id>P29373</id>
    </interactant>
    <interactant intactId="EBI-749265">
        <id>Q8N6L0</id>
        <label>KASH5</label>
    </interactant>
    <organismsDiffer>false</organismsDiffer>
    <experiments>6</experiments>
</comment>
<comment type="subcellular location">
    <subcellularLocation>
        <location>Cytoplasm</location>
    </subcellularLocation>
    <subcellularLocation>
        <location>Endoplasmic reticulum</location>
    </subcellularLocation>
    <subcellularLocation>
        <location>Nucleus</location>
    </subcellularLocation>
    <text>Upon ligand binding, a conformation change exposes a nuclear localization motif and the protein is transported into the nucleus.</text>
</comment>
<comment type="induction">
    <text>By retinoic acid.</text>
</comment>
<comment type="domain">
    <text>Forms a beta-barrel structure that accommodates hydrophobic ligands in its interior.</text>
</comment>
<comment type="PTM">
    <text evidence="6">Sumoylated in response to retinoic acid binding, sumoylation is critical for dissociation from ER and subsequent nuclear translocation.</text>
</comment>
<comment type="similarity">
    <text evidence="7">Belongs to the calycin superfamily. Fatty-acid binding protein (FABP) family.</text>
</comment>
<evidence type="ECO:0000250" key="1"/>
<evidence type="ECO:0000269" key="2">
    <source>
    </source>
</evidence>
<evidence type="ECO:0000269" key="3">
    <source>
    </source>
</evidence>
<evidence type="ECO:0000269" key="4">
    <source>
    </source>
</evidence>
<evidence type="ECO:0000269" key="5">
    <source>
    </source>
</evidence>
<evidence type="ECO:0000269" key="6">
    <source>
    </source>
</evidence>
<evidence type="ECO:0000305" key="7"/>
<evidence type="ECO:0007744" key="8">
    <source>
        <dbReference type="PDB" id="2FR3"/>
    </source>
</evidence>
<evidence type="ECO:0007744" key="9">
    <source>
        <dbReference type="PDB" id="2FRS"/>
    </source>
</evidence>
<evidence type="ECO:0007744" key="10">
    <source>
        <dbReference type="PDB" id="2FS6"/>
    </source>
</evidence>
<evidence type="ECO:0007744" key="11">
    <source>
        <dbReference type="PDB" id="2FS7"/>
    </source>
</evidence>
<evidence type="ECO:0007744" key="12">
    <source>
        <dbReference type="PDB" id="2G78"/>
    </source>
</evidence>
<evidence type="ECO:0007744" key="13">
    <source>
        <dbReference type="PDB" id="2G79"/>
    </source>
</evidence>
<evidence type="ECO:0007829" key="14">
    <source>
        <dbReference type="PDB" id="1BLR"/>
    </source>
</evidence>
<evidence type="ECO:0007829" key="15">
    <source>
        <dbReference type="PDB" id="1BM5"/>
    </source>
</evidence>
<evidence type="ECO:0007829" key="16">
    <source>
        <dbReference type="PDB" id="4M7M"/>
    </source>
</evidence>
<evidence type="ECO:0007829" key="17">
    <source>
        <dbReference type="PDB" id="6Z2U"/>
    </source>
</evidence>
<evidence type="ECO:0007829" key="18">
    <source>
        <dbReference type="PDB" id="7OXW"/>
    </source>
</evidence>
<organism>
    <name type="scientific">Homo sapiens</name>
    <name type="common">Human</name>
    <dbReference type="NCBI Taxonomy" id="9606"/>
    <lineage>
        <taxon>Eukaryota</taxon>
        <taxon>Metazoa</taxon>
        <taxon>Chordata</taxon>
        <taxon>Craniata</taxon>
        <taxon>Vertebrata</taxon>
        <taxon>Euteleostomi</taxon>
        <taxon>Mammalia</taxon>
        <taxon>Eutheria</taxon>
        <taxon>Euarchontoglires</taxon>
        <taxon>Primates</taxon>
        <taxon>Haplorrhini</taxon>
        <taxon>Catarrhini</taxon>
        <taxon>Hominidae</taxon>
        <taxon>Homo</taxon>
    </lineage>
</organism>
<proteinExistence type="evidence at protein level"/>
<feature type="chain" id="PRO_0000067415" description="Cellular retinoic acid-binding protein 2">
    <location>
        <begin position="1"/>
        <end position="138"/>
    </location>
</feature>
<feature type="short sequence motif" description="Nuclear localization signal">
    <location>
        <begin position="21"/>
        <end position="31"/>
    </location>
</feature>
<feature type="binding site" evidence="4 8">
    <location>
        <begin position="133"/>
        <end position="135"/>
    </location>
    <ligand>
        <name>all-trans-retinoate</name>
        <dbReference type="ChEBI" id="CHEBI:35291"/>
    </ligand>
</feature>
<feature type="cross-link" description="Glycyl lysine isopeptide (Lys-Gly) (interchain with G-Cter in SUMO)" evidence="6">
    <location>
        <position position="102"/>
    </location>
</feature>
<feature type="mutagenesis site" description="Loss of ligand-induced nuclear import; when associated with A-30 and A-31." evidence="3">
    <original>K</original>
    <variation>A</variation>
    <location>
        <position position="21"/>
    </location>
</feature>
<feature type="mutagenesis site" description="Loss of ligand-induced nuclear import; when associated with A-21 and A-31." evidence="3">
    <original>R</original>
    <variation>A</variation>
    <location>
        <position position="30"/>
    </location>
</feature>
<feature type="mutagenesis site" description="Loss of ligand-induced nuclear import; when associated with A-21 and A-30." evidence="3">
    <original>K</original>
    <variation>A</variation>
    <location>
        <position position="31"/>
    </location>
</feature>
<feature type="strand" evidence="17">
    <location>
        <begin position="2"/>
        <end position="4"/>
    </location>
</feature>
<feature type="strand" evidence="18">
    <location>
        <begin position="6"/>
        <end position="15"/>
    </location>
</feature>
<feature type="helix" evidence="18">
    <location>
        <begin position="16"/>
        <end position="23"/>
    </location>
</feature>
<feature type="helix" evidence="18">
    <location>
        <begin position="24"/>
        <end position="26"/>
    </location>
</feature>
<feature type="helix" evidence="18">
    <location>
        <begin position="29"/>
        <end position="32"/>
    </location>
</feature>
<feature type="turn" evidence="18">
    <location>
        <begin position="33"/>
        <end position="35"/>
    </location>
</feature>
<feature type="strand" evidence="18">
    <location>
        <begin position="38"/>
        <end position="40"/>
    </location>
</feature>
<feature type="strand" evidence="18">
    <location>
        <begin position="42"/>
        <end position="47"/>
    </location>
</feature>
<feature type="strand" evidence="18">
    <location>
        <begin position="50"/>
        <end position="56"/>
    </location>
</feature>
<feature type="strand" evidence="14">
    <location>
        <begin position="57"/>
        <end position="59"/>
    </location>
</feature>
<feature type="strand" evidence="18">
    <location>
        <begin position="61"/>
        <end position="67"/>
    </location>
</feature>
<feature type="strand" evidence="18">
    <location>
        <begin position="72"/>
        <end position="76"/>
    </location>
</feature>
<feature type="strand" evidence="15">
    <location>
        <begin position="77"/>
        <end position="79"/>
    </location>
</feature>
<feature type="strand" evidence="18">
    <location>
        <begin position="81"/>
        <end position="90"/>
    </location>
</feature>
<feature type="strand" evidence="18">
    <location>
        <begin position="93"/>
        <end position="103"/>
    </location>
</feature>
<feature type="strand" evidence="18">
    <location>
        <begin position="108"/>
        <end position="114"/>
    </location>
</feature>
<feature type="strand" evidence="16">
    <location>
        <begin position="116"/>
        <end position="118"/>
    </location>
</feature>
<feature type="strand" evidence="18">
    <location>
        <begin position="120"/>
        <end position="126"/>
    </location>
</feature>
<feature type="strand" evidence="18">
    <location>
        <begin position="129"/>
        <end position="137"/>
    </location>
</feature>
<reference key="1">
    <citation type="journal article" date="1991" name="J. Biol. Chem.">
        <title>Molecular cloning of two human cellular retinoic acid-binding proteins (CRABP). Retinoic acid-induced expression of CRABP-II but not CRABP-I in adult human skin in vivo and in skin fibroblasts in vitro.</title>
        <authorList>
            <person name="Astroem A."/>
            <person name="Tavakkol A."/>
            <person name="Pettersson U."/>
            <person name="Cromie M."/>
            <person name="Elder J.T."/>
            <person name="Voorhees J.J."/>
        </authorList>
    </citation>
    <scope>NUCLEOTIDE SEQUENCE [MRNA]</scope>
</reference>
<reference key="2">
    <citation type="journal article" date="1992" name="Exp. Cell Res.">
        <title>The molecular cloning and expression of two CRABP cDNAs from human skin.</title>
        <authorList>
            <person name="Eller M.S."/>
            <person name="Oleksiak M.F."/>
            <person name="McQuaid T.J."/>
            <person name="McAfee S.G."/>
            <person name="Gilchrest B.A."/>
        </authorList>
    </citation>
    <scope>NUCLEOTIDE SEQUENCE [MRNA]</scope>
</reference>
<reference key="3">
    <citation type="journal article" date="1992" name="J. Biol. Chem.">
        <title>Structure of the human cellular retinoic acid-binding protein II gene. Early transcriptional regulation by retinoic acid.</title>
        <authorList>
            <person name="Aastroem A."/>
            <person name="Pettersson U."/>
            <person name="Voorhees J.J."/>
        </authorList>
    </citation>
    <scope>NUCLEOTIDE SEQUENCE [GENOMIC DNA]</scope>
    <source>
        <tissue>Placenta</tissue>
    </source>
</reference>
<reference key="4">
    <citation type="submission" date="2004-05" db="EMBL/GenBank/DDBJ databases">
        <title>Cloning of human full open reading frames in Gateway(TM) system entry vector (pDONR201).</title>
        <authorList>
            <person name="Ebert L."/>
            <person name="Schick M."/>
            <person name="Neubert P."/>
            <person name="Schatten R."/>
            <person name="Henze S."/>
            <person name="Korn B."/>
        </authorList>
    </citation>
    <scope>NUCLEOTIDE SEQUENCE [LARGE SCALE MRNA]</scope>
</reference>
<reference key="5">
    <citation type="submission" date="2004-10" db="EMBL/GenBank/DDBJ databases">
        <title>Cloning of human full-length CDSs in BD Creator(TM) system donor vector.</title>
        <authorList>
            <person name="Kalnine N."/>
            <person name="Chen X."/>
            <person name="Rolfs A."/>
            <person name="Halleck A."/>
            <person name="Hines L."/>
            <person name="Eisenstein S."/>
            <person name="Koundinya M."/>
            <person name="Raphael J."/>
            <person name="Moreira D."/>
            <person name="Kelley T."/>
            <person name="LaBaer J."/>
            <person name="Lin Y."/>
            <person name="Phelan M."/>
            <person name="Farmer A."/>
        </authorList>
    </citation>
    <scope>NUCLEOTIDE SEQUENCE [LARGE SCALE MRNA]</scope>
</reference>
<reference key="6">
    <citation type="journal article" date="2004" name="Nat. Genet.">
        <title>Complete sequencing and characterization of 21,243 full-length human cDNAs.</title>
        <authorList>
            <person name="Ota T."/>
            <person name="Suzuki Y."/>
            <person name="Nishikawa T."/>
            <person name="Otsuki T."/>
            <person name="Sugiyama T."/>
            <person name="Irie R."/>
            <person name="Wakamatsu A."/>
            <person name="Hayashi K."/>
            <person name="Sato H."/>
            <person name="Nagai K."/>
            <person name="Kimura K."/>
            <person name="Makita H."/>
            <person name="Sekine M."/>
            <person name="Obayashi M."/>
            <person name="Nishi T."/>
            <person name="Shibahara T."/>
            <person name="Tanaka T."/>
            <person name="Ishii S."/>
            <person name="Yamamoto J."/>
            <person name="Saito K."/>
            <person name="Kawai Y."/>
            <person name="Isono Y."/>
            <person name="Nakamura Y."/>
            <person name="Nagahari K."/>
            <person name="Murakami K."/>
            <person name="Yasuda T."/>
            <person name="Iwayanagi T."/>
            <person name="Wagatsuma M."/>
            <person name="Shiratori A."/>
            <person name="Sudo H."/>
            <person name="Hosoiri T."/>
            <person name="Kaku Y."/>
            <person name="Kodaira H."/>
            <person name="Kondo H."/>
            <person name="Sugawara M."/>
            <person name="Takahashi M."/>
            <person name="Kanda K."/>
            <person name="Yokoi T."/>
            <person name="Furuya T."/>
            <person name="Kikkawa E."/>
            <person name="Omura Y."/>
            <person name="Abe K."/>
            <person name="Kamihara K."/>
            <person name="Katsuta N."/>
            <person name="Sato K."/>
            <person name="Tanikawa M."/>
            <person name="Yamazaki M."/>
            <person name="Ninomiya K."/>
            <person name="Ishibashi T."/>
            <person name="Yamashita H."/>
            <person name="Murakawa K."/>
            <person name="Fujimori K."/>
            <person name="Tanai H."/>
            <person name="Kimata M."/>
            <person name="Watanabe M."/>
            <person name="Hiraoka S."/>
            <person name="Chiba Y."/>
            <person name="Ishida S."/>
            <person name="Ono Y."/>
            <person name="Takiguchi S."/>
            <person name="Watanabe S."/>
            <person name="Yosida M."/>
            <person name="Hotuta T."/>
            <person name="Kusano J."/>
            <person name="Kanehori K."/>
            <person name="Takahashi-Fujii A."/>
            <person name="Hara H."/>
            <person name="Tanase T.-O."/>
            <person name="Nomura Y."/>
            <person name="Togiya S."/>
            <person name="Komai F."/>
            <person name="Hara R."/>
            <person name="Takeuchi K."/>
            <person name="Arita M."/>
            <person name="Imose N."/>
            <person name="Musashino K."/>
            <person name="Yuuki H."/>
            <person name="Oshima A."/>
            <person name="Sasaki N."/>
            <person name="Aotsuka S."/>
            <person name="Yoshikawa Y."/>
            <person name="Matsunawa H."/>
            <person name="Ichihara T."/>
            <person name="Shiohata N."/>
            <person name="Sano S."/>
            <person name="Moriya S."/>
            <person name="Momiyama H."/>
            <person name="Satoh N."/>
            <person name="Takami S."/>
            <person name="Terashima Y."/>
            <person name="Suzuki O."/>
            <person name="Nakagawa S."/>
            <person name="Senoh A."/>
            <person name="Mizoguchi H."/>
            <person name="Goto Y."/>
            <person name="Shimizu F."/>
            <person name="Wakebe H."/>
            <person name="Hishigaki H."/>
            <person name="Watanabe T."/>
            <person name="Sugiyama A."/>
            <person name="Takemoto M."/>
            <person name="Kawakami B."/>
            <person name="Yamazaki M."/>
            <person name="Watanabe K."/>
            <person name="Kumagai A."/>
            <person name="Itakura S."/>
            <person name="Fukuzumi Y."/>
            <person name="Fujimori Y."/>
            <person name="Komiyama M."/>
            <person name="Tashiro H."/>
            <person name="Tanigami A."/>
            <person name="Fujiwara T."/>
            <person name="Ono T."/>
            <person name="Yamada K."/>
            <person name="Fujii Y."/>
            <person name="Ozaki K."/>
            <person name="Hirao M."/>
            <person name="Ohmori Y."/>
            <person name="Kawabata A."/>
            <person name="Hikiji T."/>
            <person name="Kobatake N."/>
            <person name="Inagaki H."/>
            <person name="Ikema Y."/>
            <person name="Okamoto S."/>
            <person name="Okitani R."/>
            <person name="Kawakami T."/>
            <person name="Noguchi S."/>
            <person name="Itoh T."/>
            <person name="Shigeta K."/>
            <person name="Senba T."/>
            <person name="Matsumura K."/>
            <person name="Nakajima Y."/>
            <person name="Mizuno T."/>
            <person name="Morinaga M."/>
            <person name="Sasaki M."/>
            <person name="Togashi T."/>
            <person name="Oyama M."/>
            <person name="Hata H."/>
            <person name="Watanabe M."/>
            <person name="Komatsu T."/>
            <person name="Mizushima-Sugano J."/>
            <person name="Satoh T."/>
            <person name="Shirai Y."/>
            <person name="Takahashi Y."/>
            <person name="Nakagawa K."/>
            <person name="Okumura K."/>
            <person name="Nagase T."/>
            <person name="Nomura N."/>
            <person name="Kikuchi H."/>
            <person name="Masuho Y."/>
            <person name="Yamashita R."/>
            <person name="Nakai K."/>
            <person name="Yada T."/>
            <person name="Nakamura Y."/>
            <person name="Ohara O."/>
            <person name="Isogai T."/>
            <person name="Sugano S."/>
        </authorList>
    </citation>
    <scope>NUCLEOTIDE SEQUENCE [LARGE SCALE MRNA]</scope>
    <source>
        <tissue>Brain</tissue>
    </source>
</reference>
<reference key="7">
    <citation type="journal article" date="2011" name="Invest. Ophthalmol. Vis. Sci.">
        <title>Full-length transcriptome analysis of human retina-derived cell lines ARPE-19 and Y79 using the vector-capping method.</title>
        <authorList>
            <person name="Oshikawa M."/>
            <person name="Tsutsui C."/>
            <person name="Ikegami T."/>
            <person name="Fuchida Y."/>
            <person name="Matsubara M."/>
            <person name="Toyama S."/>
            <person name="Usami R."/>
            <person name="Ohtoko K."/>
            <person name="Kato S."/>
        </authorList>
    </citation>
    <scope>NUCLEOTIDE SEQUENCE [LARGE SCALE MRNA]</scope>
</reference>
<reference key="8">
    <citation type="journal article" date="2006" name="Nature">
        <title>The DNA sequence and biological annotation of human chromosome 1.</title>
        <authorList>
            <person name="Gregory S.G."/>
            <person name="Barlow K.F."/>
            <person name="McLay K.E."/>
            <person name="Kaul R."/>
            <person name="Swarbreck D."/>
            <person name="Dunham A."/>
            <person name="Scott C.E."/>
            <person name="Howe K.L."/>
            <person name="Woodfine K."/>
            <person name="Spencer C.C.A."/>
            <person name="Jones M.C."/>
            <person name="Gillson C."/>
            <person name="Searle S."/>
            <person name="Zhou Y."/>
            <person name="Kokocinski F."/>
            <person name="McDonald L."/>
            <person name="Evans R."/>
            <person name="Phillips K."/>
            <person name="Atkinson A."/>
            <person name="Cooper R."/>
            <person name="Jones C."/>
            <person name="Hall R.E."/>
            <person name="Andrews T.D."/>
            <person name="Lloyd C."/>
            <person name="Ainscough R."/>
            <person name="Almeida J.P."/>
            <person name="Ambrose K.D."/>
            <person name="Anderson F."/>
            <person name="Andrew R.W."/>
            <person name="Ashwell R.I.S."/>
            <person name="Aubin K."/>
            <person name="Babbage A.K."/>
            <person name="Bagguley C.L."/>
            <person name="Bailey J."/>
            <person name="Beasley H."/>
            <person name="Bethel G."/>
            <person name="Bird C.P."/>
            <person name="Bray-Allen S."/>
            <person name="Brown J.Y."/>
            <person name="Brown A.J."/>
            <person name="Buckley D."/>
            <person name="Burton J."/>
            <person name="Bye J."/>
            <person name="Carder C."/>
            <person name="Chapman J.C."/>
            <person name="Clark S.Y."/>
            <person name="Clarke G."/>
            <person name="Clee C."/>
            <person name="Cobley V."/>
            <person name="Collier R.E."/>
            <person name="Corby N."/>
            <person name="Coville G.J."/>
            <person name="Davies J."/>
            <person name="Deadman R."/>
            <person name="Dunn M."/>
            <person name="Earthrowl M."/>
            <person name="Ellington A.G."/>
            <person name="Errington H."/>
            <person name="Frankish A."/>
            <person name="Frankland J."/>
            <person name="French L."/>
            <person name="Garner P."/>
            <person name="Garnett J."/>
            <person name="Gay L."/>
            <person name="Ghori M.R.J."/>
            <person name="Gibson R."/>
            <person name="Gilby L.M."/>
            <person name="Gillett W."/>
            <person name="Glithero R.J."/>
            <person name="Grafham D.V."/>
            <person name="Griffiths C."/>
            <person name="Griffiths-Jones S."/>
            <person name="Grocock R."/>
            <person name="Hammond S."/>
            <person name="Harrison E.S.I."/>
            <person name="Hart E."/>
            <person name="Haugen E."/>
            <person name="Heath P.D."/>
            <person name="Holmes S."/>
            <person name="Holt K."/>
            <person name="Howden P.J."/>
            <person name="Hunt A.R."/>
            <person name="Hunt S.E."/>
            <person name="Hunter G."/>
            <person name="Isherwood J."/>
            <person name="James R."/>
            <person name="Johnson C."/>
            <person name="Johnson D."/>
            <person name="Joy A."/>
            <person name="Kay M."/>
            <person name="Kershaw J.K."/>
            <person name="Kibukawa M."/>
            <person name="Kimberley A.M."/>
            <person name="King A."/>
            <person name="Knights A.J."/>
            <person name="Lad H."/>
            <person name="Laird G."/>
            <person name="Lawlor S."/>
            <person name="Leongamornlert D.A."/>
            <person name="Lloyd D.M."/>
            <person name="Loveland J."/>
            <person name="Lovell J."/>
            <person name="Lush M.J."/>
            <person name="Lyne R."/>
            <person name="Martin S."/>
            <person name="Mashreghi-Mohammadi M."/>
            <person name="Matthews L."/>
            <person name="Matthews N.S.W."/>
            <person name="McLaren S."/>
            <person name="Milne S."/>
            <person name="Mistry S."/>
            <person name="Moore M.J.F."/>
            <person name="Nickerson T."/>
            <person name="O'Dell C.N."/>
            <person name="Oliver K."/>
            <person name="Palmeiri A."/>
            <person name="Palmer S.A."/>
            <person name="Parker A."/>
            <person name="Patel D."/>
            <person name="Pearce A.V."/>
            <person name="Peck A.I."/>
            <person name="Pelan S."/>
            <person name="Phelps K."/>
            <person name="Phillimore B.J."/>
            <person name="Plumb R."/>
            <person name="Rajan J."/>
            <person name="Raymond C."/>
            <person name="Rouse G."/>
            <person name="Saenphimmachak C."/>
            <person name="Sehra H.K."/>
            <person name="Sheridan E."/>
            <person name="Shownkeen R."/>
            <person name="Sims S."/>
            <person name="Skuce C.D."/>
            <person name="Smith M."/>
            <person name="Steward C."/>
            <person name="Subramanian S."/>
            <person name="Sycamore N."/>
            <person name="Tracey A."/>
            <person name="Tromans A."/>
            <person name="Van Helmond Z."/>
            <person name="Wall M."/>
            <person name="Wallis J.M."/>
            <person name="White S."/>
            <person name="Whitehead S.L."/>
            <person name="Wilkinson J.E."/>
            <person name="Willey D.L."/>
            <person name="Williams H."/>
            <person name="Wilming L."/>
            <person name="Wray P.W."/>
            <person name="Wu Z."/>
            <person name="Coulson A."/>
            <person name="Vaudin M."/>
            <person name="Sulston J.E."/>
            <person name="Durbin R.M."/>
            <person name="Hubbard T."/>
            <person name="Wooster R."/>
            <person name="Dunham I."/>
            <person name="Carter N.P."/>
            <person name="McVean G."/>
            <person name="Ross M.T."/>
            <person name="Harrow J."/>
            <person name="Olson M.V."/>
            <person name="Beck S."/>
            <person name="Rogers J."/>
            <person name="Bentley D.R."/>
        </authorList>
    </citation>
    <scope>NUCLEOTIDE SEQUENCE [LARGE SCALE GENOMIC DNA]</scope>
</reference>
<reference key="9">
    <citation type="submission" date="2005-09" db="EMBL/GenBank/DDBJ databases">
        <authorList>
            <person name="Mural R.J."/>
            <person name="Istrail S."/>
            <person name="Sutton G.G."/>
            <person name="Florea L."/>
            <person name="Halpern A.L."/>
            <person name="Mobarry C.M."/>
            <person name="Lippert R."/>
            <person name="Walenz B."/>
            <person name="Shatkay H."/>
            <person name="Dew I."/>
            <person name="Miller J.R."/>
            <person name="Flanigan M.J."/>
            <person name="Edwards N.J."/>
            <person name="Bolanos R."/>
            <person name="Fasulo D."/>
            <person name="Halldorsson B.V."/>
            <person name="Hannenhalli S."/>
            <person name="Turner R."/>
            <person name="Yooseph S."/>
            <person name="Lu F."/>
            <person name="Nusskern D.R."/>
            <person name="Shue B.C."/>
            <person name="Zheng X.H."/>
            <person name="Zhong F."/>
            <person name="Delcher A.L."/>
            <person name="Huson D.H."/>
            <person name="Kravitz S.A."/>
            <person name="Mouchard L."/>
            <person name="Reinert K."/>
            <person name="Remington K.A."/>
            <person name="Clark A.G."/>
            <person name="Waterman M.S."/>
            <person name="Eichler E.E."/>
            <person name="Adams M.D."/>
            <person name="Hunkapiller M.W."/>
            <person name="Myers E.W."/>
            <person name="Venter J.C."/>
        </authorList>
    </citation>
    <scope>NUCLEOTIDE SEQUENCE [LARGE SCALE GENOMIC DNA]</scope>
</reference>
<reference key="10">
    <citation type="journal article" date="2004" name="Genome Res.">
        <title>The status, quality, and expansion of the NIH full-length cDNA project: the Mammalian Gene Collection (MGC).</title>
        <authorList>
            <consortium name="The MGC Project Team"/>
        </authorList>
    </citation>
    <scope>NUCLEOTIDE SEQUENCE [LARGE SCALE MRNA]</scope>
    <source>
        <tissue>Colon</tissue>
    </source>
</reference>
<reference key="11">
    <citation type="journal article" date="2002" name="Mol. Cell. Biol.">
        <title>Direct channeling of retinoic acid between cellular retinoic acid-binding protein II and retinoic acid receptor sensitizes mammary carcinoma cells to retinoic acid-induced growth arrest.</title>
        <authorList>
            <person name="Budhu A.S."/>
            <person name="Noy N."/>
        </authorList>
    </citation>
    <scope>SUBCELLULAR LOCATION</scope>
    <scope>INTERACTION WITH NUCLEAR RETINOIC ACID RECEPTORS</scope>
</reference>
<reference key="12">
    <citation type="journal article" date="2005" name="Mol. Cell">
        <title>A ligand-activated nuclear localization signal in cellular retinoic acid binding protein-II.</title>
        <authorList>
            <person name="Sessler R.J."/>
            <person name="Noy N."/>
        </authorList>
    </citation>
    <scope>SUBCELLULAR LOCATION</scope>
    <scope>MUTAGENESIS OF LYS-21; ARG-30 AND LYS-31</scope>
</reference>
<reference key="13">
    <citation type="journal article" date="2011" name="BMC Syst. Biol.">
        <title>Initial characterization of the human central proteome.</title>
        <authorList>
            <person name="Burkard T.R."/>
            <person name="Planyavsky M."/>
            <person name="Kaupe I."/>
            <person name="Breitwieser F.P."/>
            <person name="Buerckstuemmer T."/>
            <person name="Bennett K.L."/>
            <person name="Superti-Furga G."/>
            <person name="Colinge J."/>
        </authorList>
    </citation>
    <scope>IDENTIFICATION BY MASS SPECTROMETRY [LARGE SCALE ANALYSIS]</scope>
</reference>
<reference key="14">
    <citation type="journal article" date="2011" name="J. Biol. Chem.">
        <title>Nuclear translocation of cellular retinoic acid-binding protein II is regulated by retinoic acid-controlled SUMOylation.</title>
        <authorList>
            <person name="Majumdar A."/>
            <person name="Petrescu A.D."/>
            <person name="Xiong Y."/>
            <person name="Noy N."/>
        </authorList>
    </citation>
    <scope>SUMOYLATION AT LYS-102</scope>
</reference>
<reference key="15">
    <citation type="journal article" date="1994" name="Structure">
        <title>Crystal structures of cellular retinoic acid binding proteins I and II in complex with all-trans-retinoic acid and a synthetic retinoid.</title>
        <authorList>
            <person name="Kleywegt G.J."/>
            <person name="Bergfors T."/>
            <person name="Senn H."/>
            <person name="le Motte P."/>
            <person name="Gsell B."/>
            <person name="Shudo K."/>
            <person name="Jones T.A."/>
        </authorList>
    </citation>
    <scope>X-RAY CRYSTALLOGRAPHY (2.2 ANGSTROMS)</scope>
</reference>
<reference key="16">
    <citation type="journal article" date="1998" name="J. Mol. Biol.">
        <title>Crystal structure of apo-cellular retinoic acid-binding protein type II (R111M) suggests a mechanism of ligand entry.</title>
        <authorList>
            <person name="Chen X."/>
            <person name="Tordova M."/>
            <person name="Gilliland G.L."/>
            <person name="Wang L."/>
            <person name="Li Y."/>
            <person name="Yan H."/>
            <person name="Ji X."/>
        </authorList>
    </citation>
    <scope>X-RAY CRYSTALLOGRAPHY (2.3 ANGSTROMS)</scope>
</reference>
<reference key="17">
    <citation type="journal article" date="1999" name="Acta Crystallogr. D">
        <title>Structures of cellular retinoic acid binding proteins I and II in complex with synthetic retinoids.</title>
        <authorList>
            <person name="Chaudhuri B.N."/>
            <person name="Kleywegt G.J."/>
            <person name="Broutin-L'Hermite I."/>
            <person name="Bergfors T."/>
            <person name="Senn H."/>
            <person name="Le Motte P."/>
            <person name="Partouche O."/>
            <person name="Jones T.A."/>
        </authorList>
    </citation>
    <scope>X-RAY CRYSTALLOGRAPHY (2.1 ANGSTROMS)</scope>
</reference>
<reference key="18">
    <citation type="journal article" date="1998" name="Biochemistry">
        <title>NMR solution structure of type II human cellular retinoic acid binding protein: implications for ligand binding.</title>
        <authorList>
            <person name="Wang L."/>
            <person name="Li Y."/>
            <person name="Abildgaard F."/>
            <person name="Markley J.L."/>
            <person name="Yan H."/>
        </authorList>
    </citation>
    <scope>STRUCTURE BY NMR</scope>
</reference>
<reference key="19">
    <citation type="journal article" date="1998" name="Biochemistry">
        <title>NMR study suggests a major role for Arg111 in maintaining the structure and dynamical properties of type II human cellular retinoic acid binding protein.</title>
        <authorList>
            <person name="Wang L."/>
            <person name="Yan H."/>
        </authorList>
    </citation>
    <scope>STRUCTURE BY NMR</scope>
</reference>
<reference evidence="8 9 10 11" key="20">
    <citation type="journal article" date="2006" name="J. Mol. Biol.">
        <title>The structure of apo-wild-type cellular retinoic acid binding protein II at 1.4 A and its relationship to ligand binding and nuclear translocation.</title>
        <authorList>
            <person name="Vaezeslami S."/>
            <person name="Mathes E."/>
            <person name="Vasileiou C."/>
            <person name="Borhan B."/>
            <person name="Geiger J.H."/>
        </authorList>
    </citation>
    <scope>X-RAY CRYSTALLOGRAPHY (1.35 ANGSTROMS) OF APOPROTEIN AND COMPLEX WITH ALL-TRANS RETINOIC ACID</scope>
</reference>
<reference evidence="12 13" key="21">
    <citation type="journal article" date="2007" name="J. Am. Chem. Soc.">
        <title>Protein design: reengineering cellular retinoic acid binding protein II into a rhodopsin protein mimic.</title>
        <authorList>
            <person name="Vasileiou C."/>
            <person name="Vaezeslami S."/>
            <person name="Crist R.M."/>
            <person name="Rabago-Smith M."/>
            <person name="Geiger J.H."/>
            <person name="Borhan B."/>
        </authorList>
    </citation>
    <scope>X-RAY CRYSTALLOGRAPHY (1.18 ANGSTROMS) OF MUTANT LYS-133/PHE-135 IN COMPLEXES WITH ALL-TRANS RETINOIC ACID AND ALL-TRANS RETINAL</scope>
</reference>